<gene>
    <name type="primary">Bmp3</name>
</gene>
<sequence>MAGARGLLCLWLGYFCLNLAQGQRPNLHLPGLRETEPSDRATGGSPSPDLRPHDKVSEHMLWLYDRYSGSSRVQATRTPGSQLPGPQPLRGGNTVRSFRAAAAGTPQTKGLHTFNLTSLTKSENILSATLYFYVGELVNISLSCPEPQGCSHHTQRQHIQIDLSAWILKSNQSQLLGHLSVDVVRPYRDSVSWLSKDITQLLRKAKQNEEFLIGFNITSRAHELPKRMLFFPEPYILVYANDAAISEPESVVSSLQRHRDFTAGTGPRLDSHVREALSVERRKKRSTGILLPLQNNELPGAEYQYKEEGAWEERKPYKSLQTQPPEKSRNKKKQRKGSHQKGQTLQFDEQTLKKARRKQWVEPRNCARRYLKVDFADIGWSEWIISPKSFDAFYCSGACQFPMPKSLKPSNHATIQSIVRAVGVVSGIPEPCCVPEKMSSLSILFFDENKNVVLKVYPNMTVDSCACR</sequence>
<name>BMP3_MOUSE</name>
<reference key="1">
    <citation type="journal article" date="2005" name="Science">
        <title>The transcriptional landscape of the mammalian genome.</title>
        <authorList>
            <person name="Carninci P."/>
            <person name="Kasukawa T."/>
            <person name="Katayama S."/>
            <person name="Gough J."/>
            <person name="Frith M.C."/>
            <person name="Maeda N."/>
            <person name="Oyama R."/>
            <person name="Ravasi T."/>
            <person name="Lenhard B."/>
            <person name="Wells C."/>
            <person name="Kodzius R."/>
            <person name="Shimokawa K."/>
            <person name="Bajic V.B."/>
            <person name="Brenner S.E."/>
            <person name="Batalov S."/>
            <person name="Forrest A.R."/>
            <person name="Zavolan M."/>
            <person name="Davis M.J."/>
            <person name="Wilming L.G."/>
            <person name="Aidinis V."/>
            <person name="Allen J.E."/>
            <person name="Ambesi-Impiombato A."/>
            <person name="Apweiler R."/>
            <person name="Aturaliya R.N."/>
            <person name="Bailey T.L."/>
            <person name="Bansal M."/>
            <person name="Baxter L."/>
            <person name="Beisel K.W."/>
            <person name="Bersano T."/>
            <person name="Bono H."/>
            <person name="Chalk A.M."/>
            <person name="Chiu K.P."/>
            <person name="Choudhary V."/>
            <person name="Christoffels A."/>
            <person name="Clutterbuck D.R."/>
            <person name="Crowe M.L."/>
            <person name="Dalla E."/>
            <person name="Dalrymple B.P."/>
            <person name="de Bono B."/>
            <person name="Della Gatta G."/>
            <person name="di Bernardo D."/>
            <person name="Down T."/>
            <person name="Engstrom P."/>
            <person name="Fagiolini M."/>
            <person name="Faulkner G."/>
            <person name="Fletcher C.F."/>
            <person name="Fukushima T."/>
            <person name="Furuno M."/>
            <person name="Futaki S."/>
            <person name="Gariboldi M."/>
            <person name="Georgii-Hemming P."/>
            <person name="Gingeras T.R."/>
            <person name="Gojobori T."/>
            <person name="Green R.E."/>
            <person name="Gustincich S."/>
            <person name="Harbers M."/>
            <person name="Hayashi Y."/>
            <person name="Hensch T.K."/>
            <person name="Hirokawa N."/>
            <person name="Hill D."/>
            <person name="Huminiecki L."/>
            <person name="Iacono M."/>
            <person name="Ikeo K."/>
            <person name="Iwama A."/>
            <person name="Ishikawa T."/>
            <person name="Jakt M."/>
            <person name="Kanapin A."/>
            <person name="Katoh M."/>
            <person name="Kawasawa Y."/>
            <person name="Kelso J."/>
            <person name="Kitamura H."/>
            <person name="Kitano H."/>
            <person name="Kollias G."/>
            <person name="Krishnan S.P."/>
            <person name="Kruger A."/>
            <person name="Kummerfeld S.K."/>
            <person name="Kurochkin I.V."/>
            <person name="Lareau L.F."/>
            <person name="Lazarevic D."/>
            <person name="Lipovich L."/>
            <person name="Liu J."/>
            <person name="Liuni S."/>
            <person name="McWilliam S."/>
            <person name="Madan Babu M."/>
            <person name="Madera M."/>
            <person name="Marchionni L."/>
            <person name="Matsuda H."/>
            <person name="Matsuzawa S."/>
            <person name="Miki H."/>
            <person name="Mignone F."/>
            <person name="Miyake S."/>
            <person name="Morris K."/>
            <person name="Mottagui-Tabar S."/>
            <person name="Mulder N."/>
            <person name="Nakano N."/>
            <person name="Nakauchi H."/>
            <person name="Ng P."/>
            <person name="Nilsson R."/>
            <person name="Nishiguchi S."/>
            <person name="Nishikawa S."/>
            <person name="Nori F."/>
            <person name="Ohara O."/>
            <person name="Okazaki Y."/>
            <person name="Orlando V."/>
            <person name="Pang K.C."/>
            <person name="Pavan W.J."/>
            <person name="Pavesi G."/>
            <person name="Pesole G."/>
            <person name="Petrovsky N."/>
            <person name="Piazza S."/>
            <person name="Reed J."/>
            <person name="Reid J.F."/>
            <person name="Ring B.Z."/>
            <person name="Ringwald M."/>
            <person name="Rost B."/>
            <person name="Ruan Y."/>
            <person name="Salzberg S.L."/>
            <person name="Sandelin A."/>
            <person name="Schneider C."/>
            <person name="Schoenbach C."/>
            <person name="Sekiguchi K."/>
            <person name="Semple C.A."/>
            <person name="Seno S."/>
            <person name="Sessa L."/>
            <person name="Sheng Y."/>
            <person name="Shibata Y."/>
            <person name="Shimada H."/>
            <person name="Shimada K."/>
            <person name="Silva D."/>
            <person name="Sinclair B."/>
            <person name="Sperling S."/>
            <person name="Stupka E."/>
            <person name="Sugiura K."/>
            <person name="Sultana R."/>
            <person name="Takenaka Y."/>
            <person name="Taki K."/>
            <person name="Tammoja K."/>
            <person name="Tan S.L."/>
            <person name="Tang S."/>
            <person name="Taylor M.S."/>
            <person name="Tegner J."/>
            <person name="Teichmann S.A."/>
            <person name="Ueda H.R."/>
            <person name="van Nimwegen E."/>
            <person name="Verardo R."/>
            <person name="Wei C.L."/>
            <person name="Yagi K."/>
            <person name="Yamanishi H."/>
            <person name="Zabarovsky E."/>
            <person name="Zhu S."/>
            <person name="Zimmer A."/>
            <person name="Hide W."/>
            <person name="Bult C."/>
            <person name="Grimmond S.M."/>
            <person name="Teasdale R.D."/>
            <person name="Liu E.T."/>
            <person name="Brusic V."/>
            <person name="Quackenbush J."/>
            <person name="Wahlestedt C."/>
            <person name="Mattick J.S."/>
            <person name="Hume D.A."/>
            <person name="Kai C."/>
            <person name="Sasaki D."/>
            <person name="Tomaru Y."/>
            <person name="Fukuda S."/>
            <person name="Kanamori-Katayama M."/>
            <person name="Suzuki M."/>
            <person name="Aoki J."/>
            <person name="Arakawa T."/>
            <person name="Iida J."/>
            <person name="Imamura K."/>
            <person name="Itoh M."/>
            <person name="Kato T."/>
            <person name="Kawaji H."/>
            <person name="Kawagashira N."/>
            <person name="Kawashima T."/>
            <person name="Kojima M."/>
            <person name="Kondo S."/>
            <person name="Konno H."/>
            <person name="Nakano K."/>
            <person name="Ninomiya N."/>
            <person name="Nishio T."/>
            <person name="Okada M."/>
            <person name="Plessy C."/>
            <person name="Shibata K."/>
            <person name="Shiraki T."/>
            <person name="Suzuki S."/>
            <person name="Tagami M."/>
            <person name="Waki K."/>
            <person name="Watahiki A."/>
            <person name="Okamura-Oho Y."/>
            <person name="Suzuki H."/>
            <person name="Kawai J."/>
            <person name="Hayashizaki Y."/>
        </authorList>
    </citation>
    <scope>NUCLEOTIDE SEQUENCE [LARGE SCALE MRNA]</scope>
    <source>
        <strain>C57BL/6J</strain>
        <tissue>Skin</tissue>
        <tissue>Thymus</tissue>
    </source>
</reference>
<reference key="2">
    <citation type="submission" date="2009-01" db="UniProtKB">
        <authorList>
            <person name="Lubec G."/>
            <person name="Sunyer B."/>
            <person name="Chen W.-Q."/>
        </authorList>
    </citation>
    <scope>PROTEIN SEQUENCE OF 260-268</scope>
    <scope>IDENTIFICATION BY MASS SPECTROMETRY</scope>
    <source>
        <strain>OF1</strain>
        <tissue>Hippocampus</tissue>
    </source>
</reference>
<reference key="3">
    <citation type="journal article" date="2001" name="Nat. Genet.">
        <title>Bone morphogenetic protein-3 is a negative regulator of bone density.</title>
        <authorList>
            <person name="Daluiski A."/>
            <person name="Engstrand T."/>
            <person name="Bahamonde M.E."/>
            <person name="Gamer L.W."/>
            <person name="Agius E."/>
            <person name="Stevenson S.L."/>
            <person name="Cox K."/>
            <person name="Rosen V."/>
            <person name="Lyons K.M."/>
        </authorList>
    </citation>
    <scope>FUNCTION</scope>
    <scope>DISRUPTION PHENOTYPE</scope>
</reference>
<reference key="4">
    <citation type="journal article" date="2012" name="Mol. Endocrinol.">
        <title>BMP3 suppresses osteoblast differentiation of bone marrow stromal cells via interaction with Acvr2b.</title>
        <authorList>
            <person name="Kokabu S."/>
            <person name="Gamer L."/>
            <person name="Cox K."/>
            <person name="Lowery J."/>
            <person name="Tsuji K."/>
            <person name="Raz R."/>
            <person name="Economides A."/>
            <person name="Katagiri T."/>
            <person name="Rosen V."/>
        </authorList>
    </citation>
    <scope>FUNCTION</scope>
    <scope>DISRUPTION PHENOTYPE</scope>
    <scope>INTERACTION WITH ACVR2B</scope>
</reference>
<dbReference type="EMBL" id="AK037225">
    <property type="protein sequence ID" value="BAC29764.1"/>
    <property type="molecule type" value="mRNA"/>
</dbReference>
<dbReference type="EMBL" id="AK040389">
    <property type="protein sequence ID" value="BAC30581.1"/>
    <property type="molecule type" value="mRNA"/>
</dbReference>
<dbReference type="CCDS" id="CCDS19458.1"/>
<dbReference type="RefSeq" id="NP_775580.1">
    <property type="nucleotide sequence ID" value="NM_173404.5"/>
</dbReference>
<dbReference type="BioGRID" id="225275">
    <property type="interactions" value="2"/>
</dbReference>
<dbReference type="FunCoup" id="Q8BHE5">
    <property type="interactions" value="337"/>
</dbReference>
<dbReference type="STRING" id="10090.ENSMUSP00000142907"/>
<dbReference type="GlyConnect" id="2159">
    <property type="glycosylation" value="1 N-Linked glycan (1 site)"/>
</dbReference>
<dbReference type="GlyCosmos" id="Q8BHE5">
    <property type="glycosylation" value="5 sites, 1 glycan"/>
</dbReference>
<dbReference type="GlyGen" id="Q8BHE5">
    <property type="glycosylation" value="5 sites, 3 N-linked glycans (4 sites)"/>
</dbReference>
<dbReference type="iPTMnet" id="Q8BHE5"/>
<dbReference type="PhosphoSitePlus" id="Q8BHE5"/>
<dbReference type="jPOST" id="Q8BHE5"/>
<dbReference type="PaxDb" id="10090-ENSMUSP00000031278"/>
<dbReference type="ProteomicsDB" id="265220"/>
<dbReference type="Antibodypedia" id="25010">
    <property type="antibodies" value="484 antibodies from 35 providers"/>
</dbReference>
<dbReference type="DNASU" id="110075"/>
<dbReference type="Ensembl" id="ENSMUST00000031278.6">
    <property type="protein sequence ID" value="ENSMUSP00000031278.5"/>
    <property type="gene ID" value="ENSMUSG00000029335.6"/>
</dbReference>
<dbReference type="GeneID" id="110075"/>
<dbReference type="KEGG" id="mmu:110075"/>
<dbReference type="UCSC" id="uc008ygg.1">
    <property type="organism name" value="mouse"/>
</dbReference>
<dbReference type="AGR" id="MGI:88179"/>
<dbReference type="CTD" id="651"/>
<dbReference type="MGI" id="MGI:88179">
    <property type="gene designation" value="Bmp3"/>
</dbReference>
<dbReference type="VEuPathDB" id="HostDB:ENSMUSG00000029335"/>
<dbReference type="eggNOG" id="KOG3900">
    <property type="taxonomic scope" value="Eukaryota"/>
</dbReference>
<dbReference type="GeneTree" id="ENSGT00940000159775"/>
<dbReference type="HOGENOM" id="CLU_020515_10_1_1"/>
<dbReference type="InParanoid" id="Q8BHE5"/>
<dbReference type="OrthoDB" id="5987191at2759"/>
<dbReference type="PhylomeDB" id="Q8BHE5"/>
<dbReference type="TreeFam" id="TF316134"/>
<dbReference type="BioGRID-ORCS" id="110075">
    <property type="hits" value="3 hits in 77 CRISPR screens"/>
</dbReference>
<dbReference type="PRO" id="PR:Q8BHE5"/>
<dbReference type="Proteomes" id="UP000000589">
    <property type="component" value="Chromosome 5"/>
</dbReference>
<dbReference type="RNAct" id="Q8BHE5">
    <property type="molecule type" value="protein"/>
</dbReference>
<dbReference type="Bgee" id="ENSMUSG00000029335">
    <property type="expression patterns" value="Expressed in perichondrium and 129 other cell types or tissues"/>
</dbReference>
<dbReference type="ExpressionAtlas" id="Q8BHE5">
    <property type="expression patterns" value="baseline and differential"/>
</dbReference>
<dbReference type="GO" id="GO:0005615">
    <property type="term" value="C:extracellular space"/>
    <property type="evidence" value="ECO:0007669"/>
    <property type="project" value="UniProtKB-KW"/>
</dbReference>
<dbReference type="GO" id="GO:0070700">
    <property type="term" value="F:BMP receptor binding"/>
    <property type="evidence" value="ECO:0000266"/>
    <property type="project" value="MGI"/>
</dbReference>
<dbReference type="GO" id="GO:0005125">
    <property type="term" value="F:cytokine activity"/>
    <property type="evidence" value="ECO:0007669"/>
    <property type="project" value="UniProtKB-KW"/>
</dbReference>
<dbReference type="GO" id="GO:0008083">
    <property type="term" value="F:growth factor activity"/>
    <property type="evidence" value="ECO:0007669"/>
    <property type="project" value="UniProtKB-KW"/>
</dbReference>
<dbReference type="GO" id="GO:0051216">
    <property type="term" value="P:cartilage development"/>
    <property type="evidence" value="ECO:0007669"/>
    <property type="project" value="UniProtKB-KW"/>
</dbReference>
<dbReference type="GO" id="GO:0030279">
    <property type="term" value="P:negative regulation of ossification"/>
    <property type="evidence" value="ECO:0007669"/>
    <property type="project" value="Ensembl"/>
</dbReference>
<dbReference type="GO" id="GO:0001649">
    <property type="term" value="P:osteoblast differentiation"/>
    <property type="evidence" value="ECO:0007669"/>
    <property type="project" value="InterPro"/>
</dbReference>
<dbReference type="GO" id="GO:0045944">
    <property type="term" value="P:positive regulation of transcription by RNA polymerase II"/>
    <property type="evidence" value="ECO:0000314"/>
    <property type="project" value="MGI"/>
</dbReference>
<dbReference type="CDD" id="cd19393">
    <property type="entry name" value="TGF_beta_BMP3"/>
    <property type="match status" value="1"/>
</dbReference>
<dbReference type="FunFam" id="2.10.90.10:FF:000008">
    <property type="entry name" value="Bone morphogenetic protein 3"/>
    <property type="match status" value="1"/>
</dbReference>
<dbReference type="Gene3D" id="2.60.120.970">
    <property type="match status" value="1"/>
</dbReference>
<dbReference type="Gene3D" id="2.10.90.10">
    <property type="entry name" value="Cystine-knot cytokines"/>
    <property type="match status" value="1"/>
</dbReference>
<dbReference type="InterPro" id="IPR017197">
    <property type="entry name" value="BMP3/BMP3B"/>
</dbReference>
<dbReference type="InterPro" id="IPR029034">
    <property type="entry name" value="Cystine-knot_cytokine"/>
</dbReference>
<dbReference type="InterPro" id="IPR001839">
    <property type="entry name" value="TGF-b_C"/>
</dbReference>
<dbReference type="InterPro" id="IPR001111">
    <property type="entry name" value="TGF-b_propeptide"/>
</dbReference>
<dbReference type="InterPro" id="IPR015615">
    <property type="entry name" value="TGF-beta-rel"/>
</dbReference>
<dbReference type="InterPro" id="IPR017948">
    <property type="entry name" value="TGFb_CS"/>
</dbReference>
<dbReference type="PANTHER" id="PTHR11848:SF144">
    <property type="entry name" value="BONE MORPHOGENETIC PROTEIN 3"/>
    <property type="match status" value="1"/>
</dbReference>
<dbReference type="PANTHER" id="PTHR11848">
    <property type="entry name" value="TGF-BETA FAMILY"/>
    <property type="match status" value="1"/>
</dbReference>
<dbReference type="Pfam" id="PF00019">
    <property type="entry name" value="TGF_beta"/>
    <property type="match status" value="1"/>
</dbReference>
<dbReference type="Pfam" id="PF00688">
    <property type="entry name" value="TGFb_propeptide"/>
    <property type="match status" value="1"/>
</dbReference>
<dbReference type="PIRSF" id="PIRSF037403">
    <property type="entry name" value="BMP3/GDF10"/>
    <property type="match status" value="1"/>
</dbReference>
<dbReference type="SMART" id="SM00204">
    <property type="entry name" value="TGFB"/>
    <property type="match status" value="1"/>
</dbReference>
<dbReference type="SUPFAM" id="SSF57501">
    <property type="entry name" value="Cystine-knot cytokines"/>
    <property type="match status" value="1"/>
</dbReference>
<dbReference type="PROSITE" id="PS00250">
    <property type="entry name" value="TGF_BETA_1"/>
    <property type="match status" value="1"/>
</dbReference>
<dbReference type="PROSITE" id="PS51362">
    <property type="entry name" value="TGF_BETA_2"/>
    <property type="match status" value="1"/>
</dbReference>
<comment type="function">
    <text evidence="4">Negatively regulates bone density. Antagonizes the ability of certain osteogenic BMPs to induce osteoprogenitor differentiation and ossification.</text>
</comment>
<comment type="subunit">
    <text evidence="1">Homodimer; disulfide-linked.</text>
</comment>
<comment type="subcellular location">
    <subcellularLocation>
        <location>Secreted</location>
    </subcellularLocation>
</comment>
<comment type="disruption phenotype">
    <text evidence="4 5">Adult mice lacking BMP3 have increased bone mass (PubMed:11138004). Targeted loss of BMP3 results also in increased differentiation of early osteoblasts precursors into mature osteoblasts and further supports a role of BMP3 in regulating adult bone mass (PubMed:22074949).</text>
</comment>
<comment type="similarity">
    <text evidence="6">Belongs to the TGF-beta family.</text>
</comment>
<evidence type="ECO:0000250" key="1"/>
<evidence type="ECO:0000255" key="2"/>
<evidence type="ECO:0000256" key="3">
    <source>
        <dbReference type="SAM" id="MobiDB-lite"/>
    </source>
</evidence>
<evidence type="ECO:0000269" key="4">
    <source>
    </source>
</evidence>
<evidence type="ECO:0000269" key="5">
    <source>
    </source>
</evidence>
<evidence type="ECO:0000305" key="6"/>
<protein>
    <recommendedName>
        <fullName>Bone morphogenetic protein 3</fullName>
        <shortName>BMP-3</shortName>
    </recommendedName>
</protein>
<organism>
    <name type="scientific">Mus musculus</name>
    <name type="common">Mouse</name>
    <dbReference type="NCBI Taxonomy" id="10090"/>
    <lineage>
        <taxon>Eukaryota</taxon>
        <taxon>Metazoa</taxon>
        <taxon>Chordata</taxon>
        <taxon>Craniata</taxon>
        <taxon>Vertebrata</taxon>
        <taxon>Euteleostomi</taxon>
        <taxon>Mammalia</taxon>
        <taxon>Eutheria</taxon>
        <taxon>Euarchontoglires</taxon>
        <taxon>Glires</taxon>
        <taxon>Rodentia</taxon>
        <taxon>Myomorpha</taxon>
        <taxon>Muroidea</taxon>
        <taxon>Muridae</taxon>
        <taxon>Murinae</taxon>
        <taxon>Mus</taxon>
        <taxon>Mus</taxon>
    </lineage>
</organism>
<feature type="signal peptide" evidence="2">
    <location>
        <begin position="1"/>
        <end position="22"/>
    </location>
</feature>
<feature type="propeptide" id="PRO_0000033838" evidence="1">
    <location>
        <begin position="23"/>
        <end position="358"/>
    </location>
</feature>
<feature type="chain" id="PRO_0000033839" description="Bone morphogenetic protein 3">
    <location>
        <begin position="359"/>
        <end position="468"/>
    </location>
</feature>
<feature type="region of interest" description="Disordered" evidence="3">
    <location>
        <begin position="29"/>
        <end position="53"/>
    </location>
</feature>
<feature type="region of interest" description="Disordered" evidence="3">
    <location>
        <begin position="314"/>
        <end position="349"/>
    </location>
</feature>
<feature type="compositionally biased region" description="Basic residues" evidence="3">
    <location>
        <begin position="329"/>
        <end position="339"/>
    </location>
</feature>
<feature type="compositionally biased region" description="Polar residues" evidence="3">
    <location>
        <begin position="340"/>
        <end position="349"/>
    </location>
</feature>
<feature type="glycosylation site" description="N-linked (GlcNAc...) asparagine" evidence="2">
    <location>
        <position position="115"/>
    </location>
</feature>
<feature type="glycosylation site" description="N-linked (GlcNAc...) asparagine" evidence="2">
    <location>
        <position position="139"/>
    </location>
</feature>
<feature type="glycosylation site" description="N-linked (GlcNAc...) asparagine" evidence="2">
    <location>
        <position position="171"/>
    </location>
</feature>
<feature type="glycosylation site" description="N-linked (GlcNAc...) asparagine" evidence="2">
    <location>
        <position position="216"/>
    </location>
</feature>
<feature type="glycosylation site" description="N-linked (GlcNAc...) asparagine" evidence="2">
    <location>
        <position position="459"/>
    </location>
</feature>
<feature type="disulfide bond" evidence="1">
    <location>
        <begin position="366"/>
        <end position="433"/>
    </location>
</feature>
<feature type="disulfide bond" evidence="1">
    <location>
        <begin position="395"/>
        <end position="465"/>
    </location>
</feature>
<feature type="disulfide bond" evidence="1">
    <location>
        <begin position="399"/>
        <end position="467"/>
    </location>
</feature>
<feature type="disulfide bond" description="Interchain" evidence="1">
    <location>
        <position position="432"/>
    </location>
</feature>
<keyword id="KW-0891">Chondrogenesis</keyword>
<keyword id="KW-0165">Cleavage on pair of basic residues</keyword>
<keyword id="KW-0202">Cytokine</keyword>
<keyword id="KW-0217">Developmental protein</keyword>
<keyword id="KW-0221">Differentiation</keyword>
<keyword id="KW-0903">Direct protein sequencing</keyword>
<keyword id="KW-1015">Disulfide bond</keyword>
<keyword id="KW-0325">Glycoprotein</keyword>
<keyword id="KW-0339">Growth factor</keyword>
<keyword id="KW-0892">Osteogenesis</keyword>
<keyword id="KW-1185">Reference proteome</keyword>
<keyword id="KW-0964">Secreted</keyword>
<keyword id="KW-0732">Signal</keyword>
<accession>Q8BHE5</accession>
<proteinExistence type="evidence at protein level"/>